<reference key="1">
    <citation type="journal article" date="2005" name="Nature">
        <title>The genome sequence of the rice blast fungus Magnaporthe grisea.</title>
        <authorList>
            <person name="Dean R.A."/>
            <person name="Talbot N.J."/>
            <person name="Ebbole D.J."/>
            <person name="Farman M.L."/>
            <person name="Mitchell T.K."/>
            <person name="Orbach M.J."/>
            <person name="Thon M.R."/>
            <person name="Kulkarni R."/>
            <person name="Xu J.-R."/>
            <person name="Pan H."/>
            <person name="Read N.D."/>
            <person name="Lee Y.-H."/>
            <person name="Carbone I."/>
            <person name="Brown D."/>
            <person name="Oh Y.Y."/>
            <person name="Donofrio N."/>
            <person name="Jeong J.S."/>
            <person name="Soanes D.M."/>
            <person name="Djonovic S."/>
            <person name="Kolomiets E."/>
            <person name="Rehmeyer C."/>
            <person name="Li W."/>
            <person name="Harding M."/>
            <person name="Kim S."/>
            <person name="Lebrun M.-H."/>
            <person name="Bohnert H."/>
            <person name="Coughlan S."/>
            <person name="Butler J."/>
            <person name="Calvo S.E."/>
            <person name="Ma L.-J."/>
            <person name="Nicol R."/>
            <person name="Purcell S."/>
            <person name="Nusbaum C."/>
            <person name="Galagan J.E."/>
            <person name="Birren B.W."/>
        </authorList>
    </citation>
    <scope>NUCLEOTIDE SEQUENCE [LARGE SCALE GENOMIC DNA]</scope>
    <source>
        <strain>70-15 / ATCC MYA-4617 / FGSC 8958</strain>
    </source>
</reference>
<protein>
    <recommendedName>
        <fullName>Phosphatidylinositol transfer protein SFH5</fullName>
        <shortName>PITP SFH5</shortName>
    </recommendedName>
</protein>
<name>SFH5_PYRO7</name>
<dbReference type="EMBL" id="CM001234">
    <property type="protein sequence ID" value="EHA51204.1"/>
    <property type="molecule type" value="Genomic_DNA"/>
</dbReference>
<dbReference type="RefSeq" id="XP_003717523.1">
    <property type="nucleotide sequence ID" value="XM_003717475.1"/>
</dbReference>
<dbReference type="SMR" id="A4R6K8"/>
<dbReference type="FunCoup" id="A4R6K8">
    <property type="interactions" value="47"/>
</dbReference>
<dbReference type="STRING" id="242507.A4R6K8"/>
<dbReference type="EnsemblFungi" id="MGG_09991T0">
    <property type="protein sequence ID" value="MGG_09991T0"/>
    <property type="gene ID" value="MGG_09991"/>
</dbReference>
<dbReference type="GeneID" id="2681014"/>
<dbReference type="KEGG" id="mgr:MGG_09991"/>
<dbReference type="VEuPathDB" id="FungiDB:MGG_09991"/>
<dbReference type="eggNOG" id="KOG1471">
    <property type="taxonomic scope" value="Eukaryota"/>
</dbReference>
<dbReference type="HOGENOM" id="CLU_045138_1_1_1"/>
<dbReference type="InParanoid" id="A4R6K8"/>
<dbReference type="OMA" id="MVQIHDY"/>
<dbReference type="OrthoDB" id="75724at2759"/>
<dbReference type="Proteomes" id="UP000009058">
    <property type="component" value="Chromosome 4"/>
</dbReference>
<dbReference type="GO" id="GO:0032541">
    <property type="term" value="C:cortical endoplasmic reticulum"/>
    <property type="evidence" value="ECO:0007669"/>
    <property type="project" value="TreeGrafter"/>
</dbReference>
<dbReference type="GO" id="GO:0005829">
    <property type="term" value="C:cytosol"/>
    <property type="evidence" value="ECO:0000250"/>
    <property type="project" value="PAMGO_MGG"/>
</dbReference>
<dbReference type="GO" id="GO:0005789">
    <property type="term" value="C:endoplasmic reticulum membrane"/>
    <property type="evidence" value="ECO:0007669"/>
    <property type="project" value="UniProtKB-SubCell"/>
</dbReference>
<dbReference type="GO" id="GO:0005886">
    <property type="term" value="C:plasma membrane"/>
    <property type="evidence" value="ECO:0007669"/>
    <property type="project" value="TreeGrafter"/>
</dbReference>
<dbReference type="GO" id="GO:0046872">
    <property type="term" value="F:metal ion binding"/>
    <property type="evidence" value="ECO:0007669"/>
    <property type="project" value="UniProtKB-KW"/>
</dbReference>
<dbReference type="GO" id="GO:0008526">
    <property type="term" value="F:phosphatidylinositol transfer activity"/>
    <property type="evidence" value="ECO:0000250"/>
    <property type="project" value="PAMGO_MGG"/>
</dbReference>
<dbReference type="GO" id="GO:0043001">
    <property type="term" value="P:Golgi to plasma membrane protein transport"/>
    <property type="evidence" value="ECO:0007669"/>
    <property type="project" value="TreeGrafter"/>
</dbReference>
<dbReference type="GO" id="GO:0015914">
    <property type="term" value="P:phospholipid transport"/>
    <property type="evidence" value="ECO:0000250"/>
    <property type="project" value="PAMGO_MGG"/>
</dbReference>
<dbReference type="GO" id="GO:0017157">
    <property type="term" value="P:regulation of exocytosis"/>
    <property type="evidence" value="ECO:0007669"/>
    <property type="project" value="TreeGrafter"/>
</dbReference>
<dbReference type="CDD" id="cd00170">
    <property type="entry name" value="SEC14"/>
    <property type="match status" value="1"/>
</dbReference>
<dbReference type="FunFam" id="3.40.525.10:FF:000017">
    <property type="entry name" value="Phosphatidylinositol transfer protein sfh5"/>
    <property type="match status" value="1"/>
</dbReference>
<dbReference type="Gene3D" id="3.40.525.10">
    <property type="entry name" value="CRAL-TRIO lipid binding domain"/>
    <property type="match status" value="1"/>
</dbReference>
<dbReference type="InterPro" id="IPR001251">
    <property type="entry name" value="CRAL-TRIO_dom"/>
</dbReference>
<dbReference type="InterPro" id="IPR036865">
    <property type="entry name" value="CRAL-TRIO_dom_sf"/>
</dbReference>
<dbReference type="InterPro" id="IPR011074">
    <property type="entry name" value="CRAL/TRIO_N_dom"/>
</dbReference>
<dbReference type="InterPro" id="IPR036273">
    <property type="entry name" value="CRAL/TRIO_N_dom_sf"/>
</dbReference>
<dbReference type="InterPro" id="IPR042938">
    <property type="entry name" value="Sfh5"/>
</dbReference>
<dbReference type="PANTHER" id="PTHR47669">
    <property type="entry name" value="PHOSPHATIDYLINOSITOL TRANSFER PROTEIN SFH5"/>
    <property type="match status" value="1"/>
</dbReference>
<dbReference type="PANTHER" id="PTHR47669:SF1">
    <property type="entry name" value="PHOSPHATIDYLINOSITOL TRANSFER PROTEIN SFH5"/>
    <property type="match status" value="1"/>
</dbReference>
<dbReference type="Pfam" id="PF00650">
    <property type="entry name" value="CRAL_TRIO"/>
    <property type="match status" value="1"/>
</dbReference>
<dbReference type="Pfam" id="PF03765">
    <property type="entry name" value="CRAL_TRIO_N"/>
    <property type="match status" value="1"/>
</dbReference>
<dbReference type="SUPFAM" id="SSF52087">
    <property type="entry name" value="CRAL/TRIO domain"/>
    <property type="match status" value="1"/>
</dbReference>
<dbReference type="SUPFAM" id="SSF46938">
    <property type="entry name" value="CRAL/TRIO N-terminal domain"/>
    <property type="match status" value="1"/>
</dbReference>
<dbReference type="PROSITE" id="PS50191">
    <property type="entry name" value="CRAL_TRIO"/>
    <property type="match status" value="1"/>
</dbReference>
<accession>A4R6K8</accession>
<accession>G4N9L6</accession>
<gene>
    <name type="primary">SFH5</name>
    <name type="ORF">MGG_09991</name>
</gene>
<comment type="function">
    <text evidence="2">Non-classical phosphatidylinositol (PtdIns) transfer protein (PITP), which exhibits PtdIns-binding/transfer activity in the absence of detectable PtdCho-binding/transfer activity. Regulates PtdIns(4,5)P2 homeostasis at the plasma membrane. Heme-binding protein that may play a role in organic oxidant-induced stress responses.</text>
</comment>
<comment type="catalytic activity">
    <reaction evidence="2">
        <text>a 1,2-diacyl-sn-glycero-3-phospho-(1D-myo-inositol)(in) = a 1,2-diacyl-sn-glycero-3-phospho-(1D-myo-inositol)(out)</text>
        <dbReference type="Rhea" id="RHEA:38691"/>
        <dbReference type="ChEBI" id="CHEBI:57880"/>
    </reaction>
    <physiologicalReaction direction="left-to-right" evidence="2">
        <dbReference type="Rhea" id="RHEA:38692"/>
    </physiologicalReaction>
</comment>
<comment type="cofactor">
    <cofactor evidence="1">
        <name>heme b</name>
        <dbReference type="ChEBI" id="CHEBI:60344"/>
    </cofactor>
</comment>
<comment type="subcellular location">
    <subcellularLocation>
        <location evidence="2">Cytoplasm</location>
    </subcellularLocation>
    <subcellularLocation>
        <location evidence="2">Endoplasmic reticulum membrane</location>
        <topology evidence="2">Peripheral membrane protein</topology>
    </subcellularLocation>
    <subcellularLocation>
        <location evidence="2">Microsome membrane</location>
        <topology evidence="2">Peripheral membrane protein</topology>
    </subcellularLocation>
</comment>
<comment type="similarity">
    <text evidence="5">Belongs to the SFH5 family.</text>
</comment>
<organism>
    <name type="scientific">Pyricularia oryzae (strain 70-15 / ATCC MYA-4617 / FGSC 8958)</name>
    <name type="common">Rice blast fungus</name>
    <name type="synonym">Magnaporthe oryzae</name>
    <dbReference type="NCBI Taxonomy" id="242507"/>
    <lineage>
        <taxon>Eukaryota</taxon>
        <taxon>Fungi</taxon>
        <taxon>Dikarya</taxon>
        <taxon>Ascomycota</taxon>
        <taxon>Pezizomycotina</taxon>
        <taxon>Sordariomycetes</taxon>
        <taxon>Sordariomycetidae</taxon>
        <taxon>Magnaporthales</taxon>
        <taxon>Pyriculariaceae</taxon>
        <taxon>Pyricularia</taxon>
    </lineage>
</organism>
<sequence>MSEAEKKATIASGAEAAAPVAAQPPADSTAVVADASTIAVSTETAQEKAGKDETPAPIAAIAEPAASEAAAAPEESAPAAAAVVPKEPAAASEETKAPAAETAATPAPAAATSAAPEATKEKDAADAPAAAEKTGVAKLWEVCQAHEHKEIWGVTLQDPSSDVPTEIVLTKFLNANDGDVPKAVDQLTKTLDWRNKMKPLELLKKSFSRAKFGGLGYVTNHSEAADSKDPALKEVFTWNIYGNVKSMEETFGDLQQFIEWRVALMELALQELNIAGASAPHTITAENDPYKIYQVHDYKSISFLRQPASVKAASKETISVFSTVYPELLKEKFFVNVPVVMGFMYGLMKLFVAPKTLKKFHPMSDGGALAREFGGSKVKTLGDAMPKEYGGKGEELKATGKETMLD</sequence>
<proteinExistence type="inferred from homology"/>
<evidence type="ECO:0000250" key="1">
    <source>
        <dbReference type="UniProtKB" id="A6ZQI5"/>
    </source>
</evidence>
<evidence type="ECO:0000250" key="2">
    <source>
        <dbReference type="UniProtKB" id="P47008"/>
    </source>
</evidence>
<evidence type="ECO:0000255" key="3">
    <source>
        <dbReference type="PROSITE-ProRule" id="PRU00056"/>
    </source>
</evidence>
<evidence type="ECO:0000256" key="4">
    <source>
        <dbReference type="SAM" id="MobiDB-lite"/>
    </source>
</evidence>
<evidence type="ECO:0000305" key="5"/>
<keyword id="KW-0963">Cytoplasm</keyword>
<keyword id="KW-0256">Endoplasmic reticulum</keyword>
<keyword id="KW-0349">Heme</keyword>
<keyword id="KW-0408">Iron</keyword>
<keyword id="KW-0445">Lipid transport</keyword>
<keyword id="KW-0472">Membrane</keyword>
<keyword id="KW-0479">Metal-binding</keyword>
<keyword id="KW-0492">Microsome</keyword>
<keyword id="KW-1185">Reference proteome</keyword>
<keyword id="KW-0813">Transport</keyword>
<feature type="chain" id="PRO_0000324982" description="Phosphatidylinositol transfer protein SFH5">
    <location>
        <begin position="1"/>
        <end position="406"/>
    </location>
</feature>
<feature type="domain" description="CRAL-TRIO" evidence="3">
    <location>
        <begin position="216"/>
        <end position="397"/>
    </location>
</feature>
<feature type="region of interest" description="Disordered" evidence="4">
    <location>
        <begin position="1"/>
        <end position="130"/>
    </location>
</feature>
<feature type="compositionally biased region" description="Low complexity" evidence="4">
    <location>
        <begin position="11"/>
        <end position="26"/>
    </location>
</feature>
<feature type="compositionally biased region" description="Basic and acidic residues" evidence="4">
    <location>
        <begin position="45"/>
        <end position="54"/>
    </location>
</feature>
<feature type="compositionally biased region" description="Low complexity" evidence="4">
    <location>
        <begin position="55"/>
        <end position="117"/>
    </location>
</feature>
<feature type="binding site" evidence="1">
    <location>
        <position position="241"/>
    </location>
    <ligand>
        <name>heme</name>
        <dbReference type="ChEBI" id="CHEBI:30413"/>
    </ligand>
</feature>
<feature type="binding site" evidence="1">
    <location>
        <position position="261"/>
    </location>
    <ligand>
        <name>heme</name>
        <dbReference type="ChEBI" id="CHEBI:30413"/>
    </ligand>
</feature>
<feature type="binding site" evidence="1">
    <location>
        <position position="296"/>
    </location>
    <ligand>
        <name>heme</name>
        <dbReference type="ChEBI" id="CHEBI:30413"/>
    </ligand>
</feature>
<feature type="binding site" description="proximal binding residue" evidence="1">
    <location>
        <position position="298"/>
    </location>
    <ligand>
        <name>heme</name>
        <dbReference type="ChEBI" id="CHEBI:30413"/>
    </ligand>
    <ligandPart>
        <name>Fe</name>
        <dbReference type="ChEBI" id="CHEBI:18248"/>
    </ligandPart>
</feature>
<feature type="binding site" evidence="1">
    <location>
        <position position="332"/>
    </location>
    <ligand>
        <name>heme</name>
        <dbReference type="ChEBI" id="CHEBI:30413"/>
    </ligand>
</feature>